<comment type="function">
    <text evidence="1">One of the proteins required for the normal export of preproteins out of the cell cytoplasm. It is a molecular chaperone that binds to a subset of precursor proteins, maintaining them in a translocation-competent state. It also specifically binds to its receptor SecA.</text>
</comment>
<comment type="subunit">
    <text evidence="1">Homotetramer, a dimer of dimers. One homotetramer interacts with 1 SecA dimer.</text>
</comment>
<comment type="subcellular location">
    <subcellularLocation>
        <location evidence="1">Cytoplasm</location>
    </subcellularLocation>
</comment>
<comment type="similarity">
    <text evidence="1">Belongs to the SecB family.</text>
</comment>
<evidence type="ECO:0000255" key="1">
    <source>
        <dbReference type="HAMAP-Rule" id="MF_00821"/>
    </source>
</evidence>
<protein>
    <recommendedName>
        <fullName evidence="1">Protein-export protein SecB</fullName>
    </recommendedName>
</protein>
<accession>A0KR79</accession>
<proteinExistence type="inferred from homology"/>
<sequence length="161" mass="17421">MAEVANNEQQAPQFNIQRVYTKDVSFETPNSPAVFQKEWNPEVKLDLDTRSAKLADDVYEVVLSLTVTAQNAGETAFLCEVQQAGIFSIAGLTEPQLAHSLGAYCPNILFPYAREAVGSLVGRGTFPQLNLAPVNFDALFAQYVQQRQAAAAAPAAEEANA</sequence>
<organism>
    <name type="scientific">Shewanella sp. (strain ANA-3)</name>
    <dbReference type="NCBI Taxonomy" id="94122"/>
    <lineage>
        <taxon>Bacteria</taxon>
        <taxon>Pseudomonadati</taxon>
        <taxon>Pseudomonadota</taxon>
        <taxon>Gammaproteobacteria</taxon>
        <taxon>Alteromonadales</taxon>
        <taxon>Shewanellaceae</taxon>
        <taxon>Shewanella</taxon>
    </lineage>
</organism>
<gene>
    <name evidence="1" type="primary">secB</name>
    <name type="ordered locus">Shewana3_0053</name>
</gene>
<dbReference type="EMBL" id="CP000469">
    <property type="protein sequence ID" value="ABK46298.1"/>
    <property type="molecule type" value="Genomic_DNA"/>
</dbReference>
<dbReference type="RefSeq" id="WP_011620882.1">
    <property type="nucleotide sequence ID" value="NC_008577.1"/>
</dbReference>
<dbReference type="SMR" id="A0KR79"/>
<dbReference type="STRING" id="94122.Shewana3_0053"/>
<dbReference type="GeneID" id="75186543"/>
<dbReference type="KEGG" id="shn:Shewana3_0053"/>
<dbReference type="eggNOG" id="COG1952">
    <property type="taxonomic scope" value="Bacteria"/>
</dbReference>
<dbReference type="HOGENOM" id="CLU_111574_1_0_6"/>
<dbReference type="OrthoDB" id="9795145at2"/>
<dbReference type="Proteomes" id="UP000002589">
    <property type="component" value="Chromosome"/>
</dbReference>
<dbReference type="GO" id="GO:0005737">
    <property type="term" value="C:cytoplasm"/>
    <property type="evidence" value="ECO:0007669"/>
    <property type="project" value="UniProtKB-SubCell"/>
</dbReference>
<dbReference type="GO" id="GO:0051082">
    <property type="term" value="F:unfolded protein binding"/>
    <property type="evidence" value="ECO:0007669"/>
    <property type="project" value="InterPro"/>
</dbReference>
<dbReference type="GO" id="GO:0006457">
    <property type="term" value="P:protein folding"/>
    <property type="evidence" value="ECO:0007669"/>
    <property type="project" value="UniProtKB-UniRule"/>
</dbReference>
<dbReference type="GO" id="GO:0051262">
    <property type="term" value="P:protein tetramerization"/>
    <property type="evidence" value="ECO:0007669"/>
    <property type="project" value="InterPro"/>
</dbReference>
<dbReference type="GO" id="GO:0015031">
    <property type="term" value="P:protein transport"/>
    <property type="evidence" value="ECO:0007669"/>
    <property type="project" value="UniProtKB-UniRule"/>
</dbReference>
<dbReference type="Gene3D" id="3.10.420.10">
    <property type="entry name" value="SecB-like"/>
    <property type="match status" value="1"/>
</dbReference>
<dbReference type="HAMAP" id="MF_00821">
    <property type="entry name" value="SecB"/>
    <property type="match status" value="1"/>
</dbReference>
<dbReference type="InterPro" id="IPR003708">
    <property type="entry name" value="SecB"/>
</dbReference>
<dbReference type="InterPro" id="IPR035958">
    <property type="entry name" value="SecB-like_sf"/>
</dbReference>
<dbReference type="NCBIfam" id="NF004393">
    <property type="entry name" value="PRK05751.1-4"/>
    <property type="match status" value="1"/>
</dbReference>
<dbReference type="NCBIfam" id="TIGR00809">
    <property type="entry name" value="secB"/>
    <property type="match status" value="1"/>
</dbReference>
<dbReference type="PANTHER" id="PTHR36918">
    <property type="match status" value="1"/>
</dbReference>
<dbReference type="PANTHER" id="PTHR36918:SF1">
    <property type="entry name" value="PROTEIN-EXPORT PROTEIN SECB"/>
    <property type="match status" value="1"/>
</dbReference>
<dbReference type="Pfam" id="PF02556">
    <property type="entry name" value="SecB"/>
    <property type="match status" value="1"/>
</dbReference>
<dbReference type="PRINTS" id="PR01594">
    <property type="entry name" value="SECBCHAPRONE"/>
</dbReference>
<dbReference type="SUPFAM" id="SSF54611">
    <property type="entry name" value="SecB-like"/>
    <property type="match status" value="1"/>
</dbReference>
<feature type="chain" id="PRO_1000062523" description="Protein-export protein SecB">
    <location>
        <begin position="1"/>
        <end position="161"/>
    </location>
</feature>
<reference key="1">
    <citation type="submission" date="2006-09" db="EMBL/GenBank/DDBJ databases">
        <title>Complete sequence of chromosome 1 of Shewanella sp. ANA-3.</title>
        <authorList>
            <person name="Copeland A."/>
            <person name="Lucas S."/>
            <person name="Lapidus A."/>
            <person name="Barry K."/>
            <person name="Detter J.C."/>
            <person name="Glavina del Rio T."/>
            <person name="Hammon N."/>
            <person name="Israni S."/>
            <person name="Dalin E."/>
            <person name="Tice H."/>
            <person name="Pitluck S."/>
            <person name="Chertkov O."/>
            <person name="Brettin T."/>
            <person name="Bruce D."/>
            <person name="Han C."/>
            <person name="Tapia R."/>
            <person name="Gilna P."/>
            <person name="Schmutz J."/>
            <person name="Larimer F."/>
            <person name="Land M."/>
            <person name="Hauser L."/>
            <person name="Kyrpides N."/>
            <person name="Kim E."/>
            <person name="Newman D."/>
            <person name="Salticov C."/>
            <person name="Konstantinidis K."/>
            <person name="Klappenback J."/>
            <person name="Tiedje J."/>
            <person name="Richardson P."/>
        </authorList>
    </citation>
    <scope>NUCLEOTIDE SEQUENCE [LARGE SCALE GENOMIC DNA]</scope>
    <source>
        <strain>ANA-3</strain>
    </source>
</reference>
<name>SECB_SHESA</name>
<keyword id="KW-0143">Chaperone</keyword>
<keyword id="KW-0963">Cytoplasm</keyword>
<keyword id="KW-0653">Protein transport</keyword>
<keyword id="KW-0811">Translocation</keyword>
<keyword id="KW-0813">Transport</keyword>